<dbReference type="EMBL" id="U19842">
    <property type="protein sequence ID" value="AAA86707.1"/>
    <property type="status" value="ALT_INIT"/>
    <property type="molecule type" value="mRNA"/>
</dbReference>
<dbReference type="RefSeq" id="NP_001038199.1">
    <property type="nucleotide sequence ID" value="NM_001044734.1"/>
</dbReference>
<dbReference type="SMR" id="P48091"/>
<dbReference type="FunCoup" id="P48091">
    <property type="interactions" value="613"/>
</dbReference>
<dbReference type="STRING" id="9544.ENSMMUP00000030390"/>
<dbReference type="GlyCosmos" id="P48091">
    <property type="glycosylation" value="3 sites, No reported glycans"/>
</dbReference>
<dbReference type="PaxDb" id="9544-ENSMMUP00000030390"/>
<dbReference type="GeneID" id="703205"/>
<dbReference type="KEGG" id="mcc:703205"/>
<dbReference type="CTD" id="3592"/>
<dbReference type="eggNOG" id="ENOG502S8JN">
    <property type="taxonomic scope" value="Eukaryota"/>
</dbReference>
<dbReference type="HOGENOM" id="CLU_108538_0_0_1"/>
<dbReference type="InParanoid" id="P48091"/>
<dbReference type="OrthoDB" id="9893660at2759"/>
<dbReference type="Proteomes" id="UP000006718">
    <property type="component" value="Unassembled WGS sequence"/>
</dbReference>
<dbReference type="GO" id="GO:0043514">
    <property type="term" value="C:interleukin-12 complex"/>
    <property type="evidence" value="ECO:0000318"/>
    <property type="project" value="GO_Central"/>
</dbReference>
<dbReference type="GO" id="GO:0005125">
    <property type="term" value="F:cytokine activity"/>
    <property type="evidence" value="ECO:0007669"/>
    <property type="project" value="UniProtKB-KW"/>
</dbReference>
<dbReference type="GO" id="GO:0008083">
    <property type="term" value="F:growth factor activity"/>
    <property type="evidence" value="ECO:0007669"/>
    <property type="project" value="UniProtKB-KW"/>
</dbReference>
<dbReference type="GO" id="GO:0005143">
    <property type="term" value="F:interleukin-12 receptor binding"/>
    <property type="evidence" value="ECO:0000318"/>
    <property type="project" value="GO_Central"/>
</dbReference>
<dbReference type="GO" id="GO:0006955">
    <property type="term" value="P:immune response"/>
    <property type="evidence" value="ECO:0007669"/>
    <property type="project" value="InterPro"/>
</dbReference>
<dbReference type="GO" id="GO:0035722">
    <property type="term" value="P:interleukin-12-mediated signaling pathway"/>
    <property type="evidence" value="ECO:0000318"/>
    <property type="project" value="GO_Central"/>
</dbReference>
<dbReference type="FunFam" id="1.20.1250.10:FF:000020">
    <property type="entry name" value="Interleukin-12 subunit alpha"/>
    <property type="match status" value="1"/>
</dbReference>
<dbReference type="Gene3D" id="1.20.1250.10">
    <property type="match status" value="1"/>
</dbReference>
<dbReference type="InterPro" id="IPR009079">
    <property type="entry name" value="4_helix_cytokine-like_core"/>
</dbReference>
<dbReference type="InterPro" id="IPR050676">
    <property type="entry name" value="IL-12"/>
</dbReference>
<dbReference type="InterPro" id="IPR004281">
    <property type="entry name" value="IL-12_alpha"/>
</dbReference>
<dbReference type="PANTHER" id="PTHR48485:SF1">
    <property type="entry name" value="INTERLEUKIN-12 SUBUNIT ALPHA"/>
    <property type="match status" value="1"/>
</dbReference>
<dbReference type="PANTHER" id="PTHR48485">
    <property type="entry name" value="INTERLEUKIN-12 SUBUNIT BETA-RELATED"/>
    <property type="match status" value="1"/>
</dbReference>
<dbReference type="Pfam" id="PF03039">
    <property type="entry name" value="IL12"/>
    <property type="match status" value="1"/>
</dbReference>
<dbReference type="SUPFAM" id="SSF47266">
    <property type="entry name" value="4-helical cytokines"/>
    <property type="match status" value="1"/>
</dbReference>
<evidence type="ECO:0000250" key="1"/>
<evidence type="ECO:0000250" key="2">
    <source>
        <dbReference type="UniProtKB" id="P29459"/>
    </source>
</evidence>
<evidence type="ECO:0000250" key="3">
    <source>
        <dbReference type="UniProtKB" id="P43431"/>
    </source>
</evidence>
<evidence type="ECO:0000255" key="4"/>
<evidence type="ECO:0000305" key="5"/>
<proteinExistence type="evidence at transcript level"/>
<protein>
    <recommendedName>
        <fullName>Interleukin-12 subunit alpha</fullName>
        <shortName>IL-12A</shortName>
    </recommendedName>
    <alternativeName>
        <fullName>Cytotoxic lymphocyte maturation factor 35 kDa subunit</fullName>
        <shortName>CLMF p35</shortName>
    </alternativeName>
    <alternativeName>
        <fullName>IL-12 subunit p35</fullName>
    </alternativeName>
</protein>
<organism>
    <name type="scientific">Macaca mulatta</name>
    <name type="common">Rhesus macaque</name>
    <dbReference type="NCBI Taxonomy" id="9544"/>
    <lineage>
        <taxon>Eukaryota</taxon>
        <taxon>Metazoa</taxon>
        <taxon>Chordata</taxon>
        <taxon>Craniata</taxon>
        <taxon>Vertebrata</taxon>
        <taxon>Euteleostomi</taxon>
        <taxon>Mammalia</taxon>
        <taxon>Eutheria</taxon>
        <taxon>Euarchontoglires</taxon>
        <taxon>Primates</taxon>
        <taxon>Haplorrhini</taxon>
        <taxon>Catarrhini</taxon>
        <taxon>Cercopithecidae</taxon>
        <taxon>Cercopithecinae</taxon>
        <taxon>Macaca</taxon>
    </lineage>
</organism>
<sequence>MCPARSLLLVATLVLLDYLSLARNLSVATPGPEMFPCLHHSQNLLKAASNTLQKARQILEFYPCTSEEIDHEDITKDKTSTVEACLPLELIKNESCLNSRETSFITNGSCLASRKTSFMMALCLRSIYEDLKMYQVEFKTMNAKLLRDPKRQIFLDQNILGVIDELMQALNFNSETVPQKSSLEEPDFYKTKIKLCILLHAFRIRAVTIDRVMSYLNAS</sequence>
<keyword id="KW-0202">Cytokine</keyword>
<keyword id="KW-1015">Disulfide bond</keyword>
<keyword id="KW-0325">Glycoprotein</keyword>
<keyword id="KW-0339">Growth factor</keyword>
<keyword id="KW-1185">Reference proteome</keyword>
<keyword id="KW-0964">Secreted</keyword>
<keyword id="KW-0732">Signal</keyword>
<accession>P48091</accession>
<gene>
    <name type="primary">IL12A</name>
</gene>
<feature type="signal peptide" evidence="1">
    <location>
        <begin position="1"/>
        <end position="22"/>
    </location>
</feature>
<feature type="chain" id="PRO_0000015606" description="Interleukin-12 subunit alpha">
    <location>
        <begin position="23"/>
        <end position="219"/>
    </location>
</feature>
<feature type="glycosylation site" description="N-linked (GlcNAc...) asparagine" evidence="4">
    <location>
        <position position="24"/>
    </location>
</feature>
<feature type="glycosylation site" description="N-linked (GlcNAc...) asparagine" evidence="4">
    <location>
        <position position="93"/>
    </location>
</feature>
<feature type="glycosylation site" description="N-linked (GlcNAc...) asparagine" evidence="4">
    <location>
        <position position="107"/>
    </location>
</feature>
<feature type="disulfide bond" evidence="2">
    <location>
        <begin position="37"/>
        <end position="110"/>
    </location>
</feature>
<feature type="disulfide bond" evidence="1">
    <location>
        <begin position="64"/>
        <end position="196"/>
    </location>
</feature>
<feature type="disulfide bond" evidence="1">
    <location>
        <begin position="85"/>
        <end position="123"/>
    </location>
</feature>
<feature type="disulfide bond" description="Interchain (with C-199 in IL12B)" evidence="1">
    <location>
        <position position="96"/>
    </location>
</feature>
<comment type="function">
    <text evidence="2 3">Heterodimerizes with IL12B to form the IL-12 cytokine or with EBI3/IL27B to form the IL-35 cytokine. IL-12 is primarily produced by professional antigen-presenting cells (APCs) such as B-cells and dendritic cells (DCs) as well as macrophages and granulocytes and regulates T-cell and natural killer-cell responses, induces the production of interferon-gamma (IFN-gamma), favors the differentiation of T-helper 1 (Th1) cells and is an important link between innate resistance and adaptive immunity. Mechanistically, exerts its biological effects through a receptor composed of IL12R1 and IL12R2 subunits. Binding to the receptor results in the rapid tyrosine phosphorylation of a number of cellular substrates including the JAK family kinases TYK2 and JAK2. In turn, recruited STAT4 gets phosphorylated and translocates to the nucleus where it regulates cytokine/growth factor responsive genes (By similarity). As part of IL-35, plays essential roles in maintaining the immune homeostasis of the liver microenvironment and also functions as an immune-suppressive cytokine (By similarity). Mediates biological events through unconventional receptors composed of IL12RB2 and gp130/IL6ST heterodimers or homodimers. Signaling requires the transcription factors STAT1 and STAT4, which form a unique heterodimer that binds to distinct DNA sites (By similarity).</text>
</comment>
<comment type="subunit">
    <text evidence="2 3">Heterodimer with IL12B; disulfide-linked. This heterodimer is known as interleukin IL-12. Heterodimer with EBI3/IL27B; not disulfide-linked. This heterodimer is known as interleukin IL-35. Interacts with NBR1; this interaction promotes IL-12 secretion (By similarity).</text>
</comment>
<comment type="subcellular location">
    <subcellularLocation>
        <location evidence="2">Secreted</location>
    </subcellularLocation>
</comment>
<comment type="similarity">
    <text evidence="5">Belongs to the IL-6 superfamily.</text>
</comment>
<comment type="sequence caution" evidence="5">
    <conflict type="erroneous initiation">
        <sequence resource="EMBL-CDS" id="AAA86707"/>
    </conflict>
</comment>
<reference key="1">
    <citation type="journal article" date="1995" name="J. Immunol.">
        <title>Comparative sequence analysis of cytokine genes from human and nonhuman primates.</title>
        <authorList>
            <person name="Villinger F.J."/>
            <person name="Brar S.S."/>
            <person name="Mayne A.E."/>
            <person name="Chikkala N."/>
            <person name="Ansari A.A."/>
        </authorList>
    </citation>
    <scope>NUCLEOTIDE SEQUENCE [MRNA]</scope>
    <source>
        <tissue>Blood</tissue>
    </source>
</reference>
<name>IL12A_MACMU</name>